<gene>
    <name type="primary">agrA</name>
    <name type="synonym">agr</name>
    <name type="ordered locus">SA1844</name>
</gene>
<reference key="1">
    <citation type="journal article" date="2001" name="Lancet">
        <title>Whole genome sequencing of meticillin-resistant Staphylococcus aureus.</title>
        <authorList>
            <person name="Kuroda M."/>
            <person name="Ohta T."/>
            <person name="Uchiyama I."/>
            <person name="Baba T."/>
            <person name="Yuzawa H."/>
            <person name="Kobayashi I."/>
            <person name="Cui L."/>
            <person name="Oguchi A."/>
            <person name="Aoki K."/>
            <person name="Nagai Y."/>
            <person name="Lian J.-Q."/>
            <person name="Ito T."/>
            <person name="Kanamori M."/>
            <person name="Matsumaru H."/>
            <person name="Maruyama A."/>
            <person name="Murakami H."/>
            <person name="Hosoyama A."/>
            <person name="Mizutani-Ui Y."/>
            <person name="Takahashi N.K."/>
            <person name="Sawano T."/>
            <person name="Inoue R."/>
            <person name="Kaito C."/>
            <person name="Sekimizu K."/>
            <person name="Hirakawa H."/>
            <person name="Kuhara S."/>
            <person name="Goto S."/>
            <person name="Yabuzaki J."/>
            <person name="Kanehisa M."/>
            <person name="Yamashita A."/>
            <person name="Oshima K."/>
            <person name="Furuya K."/>
            <person name="Yoshino C."/>
            <person name="Shiba T."/>
            <person name="Hattori M."/>
            <person name="Ogasawara N."/>
            <person name="Hayashi H."/>
            <person name="Hiramatsu K."/>
        </authorList>
    </citation>
    <scope>NUCLEOTIDE SEQUENCE [LARGE SCALE GENOMIC DNA]</scope>
    <source>
        <strain>N315</strain>
    </source>
</reference>
<reference key="2">
    <citation type="submission" date="2007-10" db="UniProtKB">
        <title>Shotgun proteomic analysis of total and membrane protein extracts of S. aureus strain N315.</title>
        <authorList>
            <person name="Vaezzadeh A.R."/>
            <person name="Deshusses J."/>
            <person name="Lescuyer P."/>
            <person name="Hochstrasser D.F."/>
        </authorList>
    </citation>
    <scope>IDENTIFICATION BY MASS SPECTROMETRY [LARGE SCALE ANALYSIS]</scope>
    <source>
        <strain>N315</strain>
    </source>
</reference>
<feature type="chain" id="PRO_0000080997" description="Accessory gene regulator protein A">
    <location>
        <begin position="1"/>
        <end position="238"/>
    </location>
</feature>
<feature type="domain" description="Response regulatory" evidence="3">
    <location>
        <begin position="2"/>
        <end position="125"/>
    </location>
</feature>
<feature type="domain" description="HTH LytTR-type" evidence="2">
    <location>
        <begin position="143"/>
        <end position="238"/>
    </location>
</feature>
<feature type="modified residue" description="4-aspartylphosphate" evidence="3">
    <location>
        <position position="59"/>
    </location>
</feature>
<name>AGRA_STAAN</name>
<sequence>MKIFICEDDPKQRENMVTIIKNYIMIEEKPMEIALATDNPYEVLEQAKNMNDIGCYFLDIQLSTDINGIKLGSEIRKHDPVGNIIFVTSHSELTYLTFVYKVAAMDFIFKDDPAELRTRIIDCLETAHTRLQLLSKDNSVETIELKRGSNSVYVQYDDIMFFESSTKSHRLIAHLDNRQIEFYGNLKELSQLDDRFFRCHNSFVVNRHNIESIDSKERIVYFKNKEHCYASVRNVKKI</sequence>
<protein>
    <recommendedName>
        <fullName>Accessory gene regulator protein A</fullName>
    </recommendedName>
</protein>
<dbReference type="EMBL" id="BA000018">
    <property type="protein sequence ID" value="BAB43126.1"/>
    <property type="molecule type" value="Genomic_DNA"/>
</dbReference>
<dbReference type="RefSeq" id="WP_000688492.1">
    <property type="nucleotide sequence ID" value="NC_002745.2"/>
</dbReference>
<dbReference type="BMRB" id="P0A0I5"/>
<dbReference type="SMR" id="P0A0I5"/>
<dbReference type="EnsemblBacteria" id="BAB43126">
    <property type="protein sequence ID" value="BAB43126"/>
    <property type="gene ID" value="BAB43126"/>
</dbReference>
<dbReference type="KEGG" id="sau:SA1844"/>
<dbReference type="HOGENOM" id="CLU_000445_14_6_9"/>
<dbReference type="PHI-base" id="PHI:8330"/>
<dbReference type="PHI-base" id="PHI:9881"/>
<dbReference type="PRO" id="PR:P0A0I5"/>
<dbReference type="GO" id="GO:0005737">
    <property type="term" value="C:cytoplasm"/>
    <property type="evidence" value="ECO:0007669"/>
    <property type="project" value="UniProtKB-SubCell"/>
</dbReference>
<dbReference type="GO" id="GO:0003677">
    <property type="term" value="F:DNA binding"/>
    <property type="evidence" value="ECO:0007669"/>
    <property type="project" value="UniProtKB-KW"/>
</dbReference>
<dbReference type="GO" id="GO:0000156">
    <property type="term" value="F:phosphorelay response regulator activity"/>
    <property type="evidence" value="ECO:0007669"/>
    <property type="project" value="InterPro"/>
</dbReference>
<dbReference type="CDD" id="cd17533">
    <property type="entry name" value="REC_LytTR_AgrA-like"/>
    <property type="match status" value="1"/>
</dbReference>
<dbReference type="FunFam" id="2.40.50.1020:FF:000005">
    <property type="entry name" value="Accessory gene regulator A"/>
    <property type="match status" value="1"/>
</dbReference>
<dbReference type="Gene3D" id="3.40.50.2300">
    <property type="match status" value="1"/>
</dbReference>
<dbReference type="Gene3D" id="2.40.50.1020">
    <property type="entry name" value="LytTr DNA-binding domain"/>
    <property type="match status" value="1"/>
</dbReference>
<dbReference type="InterPro" id="IPR011006">
    <property type="entry name" value="CheY-like_superfamily"/>
</dbReference>
<dbReference type="InterPro" id="IPR046947">
    <property type="entry name" value="LytR-like"/>
</dbReference>
<dbReference type="InterPro" id="IPR007492">
    <property type="entry name" value="LytTR_DNA-bd_dom"/>
</dbReference>
<dbReference type="InterPro" id="IPR001789">
    <property type="entry name" value="Sig_transdc_resp-reg_receiver"/>
</dbReference>
<dbReference type="NCBIfam" id="NF046049">
    <property type="entry name" value="quorum_RR_AgrA"/>
    <property type="match status" value="1"/>
</dbReference>
<dbReference type="PANTHER" id="PTHR37299:SF3">
    <property type="entry name" value="STAGE 0 SPORULATION PROTEIN A HOMOLOG"/>
    <property type="match status" value="1"/>
</dbReference>
<dbReference type="PANTHER" id="PTHR37299">
    <property type="entry name" value="TRANSCRIPTIONAL REGULATOR-RELATED"/>
    <property type="match status" value="1"/>
</dbReference>
<dbReference type="Pfam" id="PF04397">
    <property type="entry name" value="LytTR"/>
    <property type="match status" value="1"/>
</dbReference>
<dbReference type="Pfam" id="PF00072">
    <property type="entry name" value="Response_reg"/>
    <property type="match status" value="1"/>
</dbReference>
<dbReference type="SMART" id="SM00850">
    <property type="entry name" value="LytTR"/>
    <property type="match status" value="1"/>
</dbReference>
<dbReference type="SMART" id="SM00448">
    <property type="entry name" value="REC"/>
    <property type="match status" value="1"/>
</dbReference>
<dbReference type="SUPFAM" id="SSF52172">
    <property type="entry name" value="CheY-like"/>
    <property type="match status" value="1"/>
</dbReference>
<dbReference type="PROSITE" id="PS50930">
    <property type="entry name" value="HTH_LYTTR"/>
    <property type="match status" value="1"/>
</dbReference>
<dbReference type="PROSITE" id="PS50110">
    <property type="entry name" value="RESPONSE_REGULATORY"/>
    <property type="match status" value="1"/>
</dbReference>
<organism>
    <name type="scientific">Staphylococcus aureus (strain N315)</name>
    <dbReference type="NCBI Taxonomy" id="158879"/>
    <lineage>
        <taxon>Bacteria</taxon>
        <taxon>Bacillati</taxon>
        <taxon>Bacillota</taxon>
        <taxon>Bacilli</taxon>
        <taxon>Bacillales</taxon>
        <taxon>Staphylococcaceae</taxon>
        <taxon>Staphylococcus</taxon>
    </lineage>
</organism>
<accession>P0A0I5</accession>
<accession>P13131</accession>
<keyword id="KW-0010">Activator</keyword>
<keyword id="KW-0963">Cytoplasm</keyword>
<keyword id="KW-0238">DNA-binding</keyword>
<keyword id="KW-0597">Phosphoprotein</keyword>
<keyword id="KW-0804">Transcription</keyword>
<keyword id="KW-0805">Transcription regulation</keyword>
<keyword id="KW-0902">Two-component regulatory system</keyword>
<evidence type="ECO:0000250" key="1"/>
<evidence type="ECO:0000255" key="2">
    <source>
        <dbReference type="PROSITE-ProRule" id="PRU00112"/>
    </source>
</evidence>
<evidence type="ECO:0000255" key="3">
    <source>
        <dbReference type="PROSITE-ProRule" id="PRU00169"/>
    </source>
</evidence>
<comment type="function">
    <text evidence="1">Required for high-level post-exponential phase expression of a series of secreted proteins.</text>
</comment>
<comment type="subcellular location">
    <subcellularLocation>
        <location evidence="1">Cytoplasm</location>
    </subcellularLocation>
</comment>
<proteinExistence type="evidence at protein level"/>